<sequence length="85" mass="9067">MAHKKGLGSSKNGRDSNAQRLGVKVFGGQLVPGGSIIVRQRGTKIKPGNNVGWGKDDTLFAKVTGVVEFRDRGRMGKFVNINASV</sequence>
<dbReference type="EMBL" id="CP000473">
    <property type="protein sequence ID" value="ABJ84136.1"/>
    <property type="molecule type" value="Genomic_DNA"/>
</dbReference>
<dbReference type="SMR" id="Q022G4"/>
<dbReference type="FunCoup" id="Q022G4">
    <property type="interactions" value="623"/>
</dbReference>
<dbReference type="STRING" id="234267.Acid_3159"/>
<dbReference type="KEGG" id="sus:Acid_3159"/>
<dbReference type="eggNOG" id="COG0211">
    <property type="taxonomic scope" value="Bacteria"/>
</dbReference>
<dbReference type="HOGENOM" id="CLU_095424_4_0_0"/>
<dbReference type="InParanoid" id="Q022G4"/>
<dbReference type="OrthoDB" id="9803474at2"/>
<dbReference type="GO" id="GO:0022625">
    <property type="term" value="C:cytosolic large ribosomal subunit"/>
    <property type="evidence" value="ECO:0007669"/>
    <property type="project" value="TreeGrafter"/>
</dbReference>
<dbReference type="GO" id="GO:0003735">
    <property type="term" value="F:structural constituent of ribosome"/>
    <property type="evidence" value="ECO:0007669"/>
    <property type="project" value="InterPro"/>
</dbReference>
<dbReference type="GO" id="GO:0006412">
    <property type="term" value="P:translation"/>
    <property type="evidence" value="ECO:0007669"/>
    <property type="project" value="UniProtKB-UniRule"/>
</dbReference>
<dbReference type="FunFam" id="2.40.50.100:FF:000020">
    <property type="entry name" value="50S ribosomal protein L27"/>
    <property type="match status" value="1"/>
</dbReference>
<dbReference type="Gene3D" id="2.40.50.100">
    <property type="match status" value="1"/>
</dbReference>
<dbReference type="HAMAP" id="MF_00539">
    <property type="entry name" value="Ribosomal_bL27"/>
    <property type="match status" value="1"/>
</dbReference>
<dbReference type="InterPro" id="IPR001684">
    <property type="entry name" value="Ribosomal_bL27"/>
</dbReference>
<dbReference type="InterPro" id="IPR018261">
    <property type="entry name" value="Ribosomal_bL27_CS"/>
</dbReference>
<dbReference type="NCBIfam" id="TIGR00062">
    <property type="entry name" value="L27"/>
    <property type="match status" value="1"/>
</dbReference>
<dbReference type="PANTHER" id="PTHR15893:SF0">
    <property type="entry name" value="LARGE RIBOSOMAL SUBUNIT PROTEIN BL27M"/>
    <property type="match status" value="1"/>
</dbReference>
<dbReference type="PANTHER" id="PTHR15893">
    <property type="entry name" value="RIBOSOMAL PROTEIN L27"/>
    <property type="match status" value="1"/>
</dbReference>
<dbReference type="Pfam" id="PF01016">
    <property type="entry name" value="Ribosomal_L27"/>
    <property type="match status" value="1"/>
</dbReference>
<dbReference type="PRINTS" id="PR00063">
    <property type="entry name" value="RIBOSOMALL27"/>
</dbReference>
<dbReference type="SUPFAM" id="SSF110324">
    <property type="entry name" value="Ribosomal L27 protein-like"/>
    <property type="match status" value="1"/>
</dbReference>
<dbReference type="PROSITE" id="PS00831">
    <property type="entry name" value="RIBOSOMAL_L27"/>
    <property type="match status" value="1"/>
</dbReference>
<feature type="chain" id="PRO_1000017614" description="Large ribosomal subunit protein bL27">
    <location>
        <begin position="1"/>
        <end position="85"/>
    </location>
</feature>
<accession>Q022G4</accession>
<name>RL27_SOLUE</name>
<keyword id="KW-0687">Ribonucleoprotein</keyword>
<keyword id="KW-0689">Ribosomal protein</keyword>
<comment type="similarity">
    <text evidence="1">Belongs to the bacterial ribosomal protein bL27 family.</text>
</comment>
<proteinExistence type="inferred from homology"/>
<evidence type="ECO:0000255" key="1">
    <source>
        <dbReference type="HAMAP-Rule" id="MF_00539"/>
    </source>
</evidence>
<evidence type="ECO:0000305" key="2"/>
<gene>
    <name evidence="1" type="primary">rpmA</name>
    <name type="ordered locus">Acid_3159</name>
</gene>
<reference key="1">
    <citation type="journal article" date="2009" name="Appl. Environ. Microbiol.">
        <title>Three genomes from the phylum Acidobacteria provide insight into the lifestyles of these microorganisms in soils.</title>
        <authorList>
            <person name="Ward N.L."/>
            <person name="Challacombe J.F."/>
            <person name="Janssen P.H."/>
            <person name="Henrissat B."/>
            <person name="Coutinho P.M."/>
            <person name="Wu M."/>
            <person name="Xie G."/>
            <person name="Haft D.H."/>
            <person name="Sait M."/>
            <person name="Badger J."/>
            <person name="Barabote R.D."/>
            <person name="Bradley B."/>
            <person name="Brettin T.S."/>
            <person name="Brinkac L.M."/>
            <person name="Bruce D."/>
            <person name="Creasy T."/>
            <person name="Daugherty S.C."/>
            <person name="Davidsen T.M."/>
            <person name="DeBoy R.T."/>
            <person name="Detter J.C."/>
            <person name="Dodson R.J."/>
            <person name="Durkin A.S."/>
            <person name="Ganapathy A."/>
            <person name="Gwinn-Giglio M."/>
            <person name="Han C.S."/>
            <person name="Khouri H."/>
            <person name="Kiss H."/>
            <person name="Kothari S.P."/>
            <person name="Madupu R."/>
            <person name="Nelson K.E."/>
            <person name="Nelson W.C."/>
            <person name="Paulsen I."/>
            <person name="Penn K."/>
            <person name="Ren Q."/>
            <person name="Rosovitz M.J."/>
            <person name="Selengut J.D."/>
            <person name="Shrivastava S."/>
            <person name="Sullivan S.A."/>
            <person name="Tapia R."/>
            <person name="Thompson L.S."/>
            <person name="Watkins K.L."/>
            <person name="Yang Q."/>
            <person name="Yu C."/>
            <person name="Zafar N."/>
            <person name="Zhou L."/>
            <person name="Kuske C.R."/>
        </authorList>
    </citation>
    <scope>NUCLEOTIDE SEQUENCE [LARGE SCALE GENOMIC DNA]</scope>
    <source>
        <strain>Ellin6076</strain>
    </source>
</reference>
<protein>
    <recommendedName>
        <fullName evidence="1">Large ribosomal subunit protein bL27</fullName>
    </recommendedName>
    <alternativeName>
        <fullName evidence="2">50S ribosomal protein L27</fullName>
    </alternativeName>
</protein>
<organism>
    <name type="scientific">Solibacter usitatus (strain Ellin6076)</name>
    <dbReference type="NCBI Taxonomy" id="234267"/>
    <lineage>
        <taxon>Bacteria</taxon>
        <taxon>Pseudomonadati</taxon>
        <taxon>Acidobacteriota</taxon>
        <taxon>Terriglobia</taxon>
        <taxon>Bryobacterales</taxon>
        <taxon>Solibacteraceae</taxon>
        <taxon>Candidatus Solibacter</taxon>
    </lineage>
</organism>